<accession>Q09228</accession>
<accession>J7RNK9</accession>
<accession>Q09229</accession>
<accession>Q86LT4</accession>
<accession>Q8MQF3</accession>
<accession>Q9XYD0</accession>
<organism>
    <name type="scientific">Caenorhabditis elegans</name>
    <dbReference type="NCBI Taxonomy" id="6239"/>
    <lineage>
        <taxon>Eukaryota</taxon>
        <taxon>Metazoa</taxon>
        <taxon>Ecdysozoa</taxon>
        <taxon>Nematoda</taxon>
        <taxon>Chromadorea</taxon>
        <taxon>Rhabditida</taxon>
        <taxon>Rhabditina</taxon>
        <taxon>Rhabditomorpha</taxon>
        <taxon>Rhabditoidea</taxon>
        <taxon>Rhabditidae</taxon>
        <taxon>Peloderinae</taxon>
        <taxon>Caenorhabditis</taxon>
    </lineage>
</organism>
<name>EGL27_CAEEL</name>
<dbReference type="EMBL" id="AF096618">
    <property type="protein sequence ID" value="AAD27790.1"/>
    <property type="molecule type" value="mRNA"/>
</dbReference>
<dbReference type="EMBL" id="BX284602">
    <property type="protein sequence ID" value="CCD62843.1"/>
    <property type="molecule type" value="Genomic_DNA"/>
</dbReference>
<dbReference type="EMBL" id="BX284602">
    <property type="protein sequence ID" value="CCD62844.2"/>
    <property type="molecule type" value="Genomic_DNA"/>
</dbReference>
<dbReference type="EMBL" id="BX284602">
    <property type="protein sequence ID" value="CCD62845.1"/>
    <property type="molecule type" value="Genomic_DNA"/>
</dbReference>
<dbReference type="EMBL" id="BX284602">
    <property type="protein sequence ID" value="CCM09405.1"/>
    <property type="molecule type" value="Genomic_DNA"/>
</dbReference>
<dbReference type="PIR" id="T43674">
    <property type="entry name" value="T43674"/>
</dbReference>
<dbReference type="RefSeq" id="NP_001021911.2">
    <property type="nucleotide sequence ID" value="NM_001026740.4"/>
</dbReference>
<dbReference type="RefSeq" id="NP_001021912.1">
    <property type="nucleotide sequence ID" value="NM_001026741.2"/>
</dbReference>
<dbReference type="RefSeq" id="NP_001263660.1">
    <molecule id="Q09228-4"/>
    <property type="nucleotide sequence ID" value="NM_001276731.3"/>
</dbReference>
<dbReference type="RefSeq" id="NP_001367420.1">
    <molecule id="Q09228-2"/>
    <property type="nucleotide sequence ID" value="NM_001381463.1"/>
</dbReference>
<dbReference type="RefSeq" id="NP_001379615.1">
    <molecule id="Q09228-3"/>
    <property type="nucleotide sequence ID" value="NM_001393107.1"/>
</dbReference>
<dbReference type="RefSeq" id="NP_741012.1">
    <molecule id="Q09228-1"/>
    <property type="nucleotide sequence ID" value="NM_171011.4"/>
</dbReference>
<dbReference type="BioGRID" id="39459">
    <property type="interactions" value="20"/>
</dbReference>
<dbReference type="DIP" id="DIP-61372N"/>
<dbReference type="FunCoup" id="Q09228">
    <property type="interactions" value="137"/>
</dbReference>
<dbReference type="IntAct" id="Q09228">
    <property type="interactions" value="7"/>
</dbReference>
<dbReference type="STRING" id="6239.C04A2.3a.1"/>
<dbReference type="iPTMnet" id="Q09228"/>
<dbReference type="PaxDb" id="6239-C04A2.3a"/>
<dbReference type="PeptideAtlas" id="Q09228"/>
<dbReference type="EnsemblMetazoa" id="C04A2.3a.1">
    <molecule id="Q09228-1"/>
    <property type="protein sequence ID" value="C04A2.3a.1"/>
    <property type="gene ID" value="WBGene00001194"/>
</dbReference>
<dbReference type="EnsemblMetazoa" id="C04A2.3b.1">
    <molecule id="Q09228-2"/>
    <property type="protein sequence ID" value="C04A2.3b.1"/>
    <property type="gene ID" value="WBGene00001194"/>
</dbReference>
<dbReference type="EnsemblMetazoa" id="C04A2.3c.1">
    <molecule id="Q09228-3"/>
    <property type="protein sequence ID" value="C04A2.3c.1"/>
    <property type="gene ID" value="WBGene00001194"/>
</dbReference>
<dbReference type="EnsemblMetazoa" id="C04A2.3c.2">
    <molecule id="Q09228-3"/>
    <property type="protein sequence ID" value="C04A2.3c.2"/>
    <property type="gene ID" value="WBGene00001194"/>
</dbReference>
<dbReference type="EnsemblMetazoa" id="C04A2.3c.3">
    <molecule id="Q09228-3"/>
    <property type="protein sequence ID" value="C04A2.3c.3"/>
    <property type="gene ID" value="WBGene00001194"/>
</dbReference>
<dbReference type="EnsemblMetazoa" id="C04A2.3c.4">
    <molecule id="Q09228-3"/>
    <property type="protein sequence ID" value="C04A2.3c.4"/>
    <property type="gene ID" value="WBGene00001194"/>
</dbReference>
<dbReference type="EnsemblMetazoa" id="C04A2.3c.5">
    <molecule id="Q09228-3"/>
    <property type="protein sequence ID" value="C04A2.3c.5"/>
    <property type="gene ID" value="WBGene00001194"/>
</dbReference>
<dbReference type="EnsemblMetazoa" id="C04A2.3c.6">
    <molecule id="Q09228-3"/>
    <property type="protein sequence ID" value="C04A2.3c.6"/>
    <property type="gene ID" value="WBGene00001194"/>
</dbReference>
<dbReference type="EnsemblMetazoa" id="C04A2.3c.7">
    <molecule id="Q09228-3"/>
    <property type="protein sequence ID" value="C04A2.3c.7"/>
    <property type="gene ID" value="WBGene00001194"/>
</dbReference>
<dbReference type="EnsemblMetazoa" id="C04A2.3d.1">
    <molecule id="Q09228-4"/>
    <property type="protein sequence ID" value="C04A2.3d.1"/>
    <property type="gene ID" value="WBGene00001194"/>
</dbReference>
<dbReference type="GeneID" id="174121"/>
<dbReference type="KEGG" id="cel:CELE_C04A2.3"/>
<dbReference type="UCSC" id="C04A2.3a">
    <molecule id="Q09228-1"/>
    <property type="organism name" value="c. elegans"/>
</dbReference>
<dbReference type="AGR" id="WB:WBGene00001194"/>
<dbReference type="CTD" id="174121"/>
<dbReference type="WormBase" id="C04A2.3a">
    <molecule id="Q09228-1"/>
    <property type="protein sequence ID" value="CE31287"/>
    <property type="gene ID" value="WBGene00001194"/>
    <property type="gene designation" value="egl-27"/>
</dbReference>
<dbReference type="WormBase" id="C04A2.3b">
    <molecule id="Q09228-2"/>
    <property type="protein sequence ID" value="CE47754"/>
    <property type="gene ID" value="WBGene00001194"/>
    <property type="gene designation" value="egl-27"/>
</dbReference>
<dbReference type="WormBase" id="C04A2.3c">
    <molecule id="Q09228-3"/>
    <property type="protein sequence ID" value="CE33268"/>
    <property type="gene ID" value="WBGene00001194"/>
    <property type="gene designation" value="egl-27"/>
</dbReference>
<dbReference type="WormBase" id="C04A2.3d">
    <molecule id="Q09228-4"/>
    <property type="protein sequence ID" value="CE47784"/>
    <property type="gene ID" value="WBGene00001194"/>
    <property type="gene designation" value="egl-27"/>
</dbReference>
<dbReference type="eggNOG" id="KOG2133">
    <property type="taxonomic scope" value="Eukaryota"/>
</dbReference>
<dbReference type="GeneTree" id="ENSGT00940000153615"/>
<dbReference type="HOGENOM" id="CLU_012470_0_0_1"/>
<dbReference type="InParanoid" id="Q09228"/>
<dbReference type="OMA" id="RTGDLCM"/>
<dbReference type="OrthoDB" id="6147534at2759"/>
<dbReference type="SignaLink" id="Q09228"/>
<dbReference type="PRO" id="PR:Q09228"/>
<dbReference type="Proteomes" id="UP000001940">
    <property type="component" value="Chromosome II"/>
</dbReference>
<dbReference type="Bgee" id="WBGene00001194">
    <property type="expression patterns" value="Expressed in pharyngeal muscle cell (C elegans) and 4 other cell types or tissues"/>
</dbReference>
<dbReference type="ExpressionAtlas" id="Q09228">
    <property type="expression patterns" value="baseline and differential"/>
</dbReference>
<dbReference type="GO" id="GO:0005634">
    <property type="term" value="C:nucleus"/>
    <property type="evidence" value="ECO:0000314"/>
    <property type="project" value="UniProtKB"/>
</dbReference>
<dbReference type="GO" id="GO:0016581">
    <property type="term" value="C:NuRD complex"/>
    <property type="evidence" value="ECO:0000250"/>
    <property type="project" value="WormBase"/>
</dbReference>
<dbReference type="GO" id="GO:0003682">
    <property type="term" value="F:chromatin binding"/>
    <property type="evidence" value="ECO:0000314"/>
    <property type="project" value="WormBase"/>
</dbReference>
<dbReference type="GO" id="GO:0019899">
    <property type="term" value="F:enzyme binding"/>
    <property type="evidence" value="ECO:0000353"/>
    <property type="project" value="WormBase"/>
</dbReference>
<dbReference type="GO" id="GO:0061629">
    <property type="term" value="F:RNA polymerase II-specific DNA-binding transcription factor binding"/>
    <property type="evidence" value="ECO:0000353"/>
    <property type="project" value="WormBase"/>
</dbReference>
<dbReference type="GO" id="GO:0043565">
    <property type="term" value="F:sequence-specific DNA binding"/>
    <property type="evidence" value="ECO:0007669"/>
    <property type="project" value="InterPro"/>
</dbReference>
<dbReference type="GO" id="GO:0003714">
    <property type="term" value="F:transcription corepressor activity"/>
    <property type="evidence" value="ECO:0000318"/>
    <property type="project" value="GO_Central"/>
</dbReference>
<dbReference type="GO" id="GO:0008270">
    <property type="term" value="F:zinc ion binding"/>
    <property type="evidence" value="ECO:0007669"/>
    <property type="project" value="UniProtKB-KW"/>
</dbReference>
<dbReference type="GO" id="GO:0010171">
    <property type="term" value="P:body morphogenesis"/>
    <property type="evidence" value="ECO:0000315"/>
    <property type="project" value="WormBase"/>
</dbReference>
<dbReference type="GO" id="GO:0007155">
    <property type="term" value="P:cell adhesion"/>
    <property type="evidence" value="ECO:0000315"/>
    <property type="project" value="WormBase"/>
</dbReference>
<dbReference type="GO" id="GO:0001708">
    <property type="term" value="P:cell fate specification"/>
    <property type="evidence" value="ECO:0000315"/>
    <property type="project" value="WormBase"/>
</dbReference>
<dbReference type="GO" id="GO:0018991">
    <property type="term" value="P:egg-laying behavior"/>
    <property type="evidence" value="ECO:0000315"/>
    <property type="project" value="WormBase"/>
</dbReference>
<dbReference type="GO" id="GO:0009792">
    <property type="term" value="P:embryo development ending in birth or egg hatching"/>
    <property type="evidence" value="ECO:0000315"/>
    <property type="project" value="WormBase"/>
</dbReference>
<dbReference type="GO" id="GO:0008544">
    <property type="term" value="P:epidermis development"/>
    <property type="evidence" value="ECO:0000315"/>
    <property type="project" value="WormBase"/>
</dbReference>
<dbReference type="GO" id="GO:0007163">
    <property type="term" value="P:establishment or maintenance of cell polarity"/>
    <property type="evidence" value="ECO:0000315"/>
    <property type="project" value="UniProtKB"/>
</dbReference>
<dbReference type="GO" id="GO:0031581">
    <property type="term" value="P:hemidesmosome assembly"/>
    <property type="evidence" value="ECO:0000316"/>
    <property type="project" value="WormBase"/>
</dbReference>
<dbReference type="GO" id="GO:0007498">
    <property type="term" value="P:mesoderm development"/>
    <property type="evidence" value="ECO:0000315"/>
    <property type="project" value="WormBase"/>
</dbReference>
<dbReference type="GO" id="GO:0002119">
    <property type="term" value="P:nematode larval development"/>
    <property type="evidence" value="ECO:0000315"/>
    <property type="project" value="WormBase"/>
</dbReference>
<dbReference type="GO" id="GO:0045138">
    <property type="term" value="P:nematode male tail tip morphogenesis"/>
    <property type="evidence" value="ECO:0000315"/>
    <property type="project" value="WormBase"/>
</dbReference>
<dbReference type="GO" id="GO:0009786">
    <property type="term" value="P:regulation of asymmetric cell division"/>
    <property type="evidence" value="ECO:0000315"/>
    <property type="project" value="WormBase"/>
</dbReference>
<dbReference type="GO" id="GO:0030334">
    <property type="term" value="P:regulation of cell migration"/>
    <property type="evidence" value="ECO:0000315"/>
    <property type="project" value="UniProtKB"/>
</dbReference>
<dbReference type="GO" id="GO:0006357">
    <property type="term" value="P:regulation of transcription by RNA polymerase II"/>
    <property type="evidence" value="ECO:0000315"/>
    <property type="project" value="WormBase"/>
</dbReference>
<dbReference type="GO" id="GO:0060290">
    <property type="term" value="P:transdifferentiation"/>
    <property type="evidence" value="ECO:0000315"/>
    <property type="project" value="WormBase"/>
</dbReference>
<dbReference type="GO" id="GO:0016055">
    <property type="term" value="P:Wnt signaling pathway"/>
    <property type="evidence" value="ECO:0000315"/>
    <property type="project" value="WormBase"/>
</dbReference>
<dbReference type="CDD" id="cd04709">
    <property type="entry name" value="BAH_MTA"/>
    <property type="match status" value="1"/>
</dbReference>
<dbReference type="CDD" id="cd11661">
    <property type="entry name" value="SANT_MTA3_like"/>
    <property type="match status" value="1"/>
</dbReference>
<dbReference type="CDD" id="cd00202">
    <property type="entry name" value="ZnF_GATA"/>
    <property type="match status" value="1"/>
</dbReference>
<dbReference type="FunFam" id="2.30.30.490:FF:000023">
    <property type="entry name" value="Egg-laying defective protein 27"/>
    <property type="match status" value="1"/>
</dbReference>
<dbReference type="FunFam" id="4.10.1240.50:FF:000006">
    <property type="entry name" value="Egg-laying defective protein 27"/>
    <property type="match status" value="1"/>
</dbReference>
<dbReference type="FunFam" id="1.10.10.60:FF:000012">
    <property type="entry name" value="Metastasis-associated 1 family, member 3"/>
    <property type="match status" value="1"/>
</dbReference>
<dbReference type="Gene3D" id="2.30.30.490">
    <property type="match status" value="1"/>
</dbReference>
<dbReference type="Gene3D" id="4.10.1240.50">
    <property type="match status" value="1"/>
</dbReference>
<dbReference type="Gene3D" id="1.10.10.60">
    <property type="entry name" value="Homeodomain-like"/>
    <property type="match status" value="1"/>
</dbReference>
<dbReference type="InterPro" id="IPR001025">
    <property type="entry name" value="BAH_dom"/>
</dbReference>
<dbReference type="InterPro" id="IPR043151">
    <property type="entry name" value="BAH_sf"/>
</dbReference>
<dbReference type="InterPro" id="IPR000949">
    <property type="entry name" value="ELM2_dom"/>
</dbReference>
<dbReference type="InterPro" id="IPR009057">
    <property type="entry name" value="Homeodomain-like_sf"/>
</dbReference>
<dbReference type="InterPro" id="IPR001005">
    <property type="entry name" value="SANT/Myb"/>
</dbReference>
<dbReference type="InterPro" id="IPR017884">
    <property type="entry name" value="SANT_dom"/>
</dbReference>
<dbReference type="InterPro" id="IPR000679">
    <property type="entry name" value="Znf_GATA"/>
</dbReference>
<dbReference type="PANTHER" id="PTHR13859">
    <property type="entry name" value="ATROPHIN-RELATED"/>
    <property type="match status" value="1"/>
</dbReference>
<dbReference type="PANTHER" id="PTHR13859:SF11">
    <property type="entry name" value="GRUNGE, ISOFORM J"/>
    <property type="match status" value="1"/>
</dbReference>
<dbReference type="Pfam" id="PF01426">
    <property type="entry name" value="BAH"/>
    <property type="match status" value="1"/>
</dbReference>
<dbReference type="Pfam" id="PF01448">
    <property type="entry name" value="ELM2"/>
    <property type="match status" value="1"/>
</dbReference>
<dbReference type="Pfam" id="PF00320">
    <property type="entry name" value="GATA"/>
    <property type="match status" value="1"/>
</dbReference>
<dbReference type="SMART" id="SM00439">
    <property type="entry name" value="BAH"/>
    <property type="match status" value="1"/>
</dbReference>
<dbReference type="SMART" id="SM01189">
    <property type="entry name" value="ELM2"/>
    <property type="match status" value="1"/>
</dbReference>
<dbReference type="SMART" id="SM00717">
    <property type="entry name" value="SANT"/>
    <property type="match status" value="1"/>
</dbReference>
<dbReference type="SMART" id="SM00401">
    <property type="entry name" value="ZnF_GATA"/>
    <property type="match status" value="1"/>
</dbReference>
<dbReference type="SUPFAM" id="SSF57716">
    <property type="entry name" value="Glucocorticoid receptor-like (DNA-binding domain)"/>
    <property type="match status" value="1"/>
</dbReference>
<dbReference type="SUPFAM" id="SSF46689">
    <property type="entry name" value="Homeodomain-like"/>
    <property type="match status" value="1"/>
</dbReference>
<dbReference type="PROSITE" id="PS51038">
    <property type="entry name" value="BAH"/>
    <property type="match status" value="1"/>
</dbReference>
<dbReference type="PROSITE" id="PS51156">
    <property type="entry name" value="ELM2"/>
    <property type="match status" value="1"/>
</dbReference>
<dbReference type="PROSITE" id="PS50114">
    <property type="entry name" value="GATA_ZN_FINGER_2"/>
    <property type="match status" value="1"/>
</dbReference>
<dbReference type="PROSITE" id="PS51293">
    <property type="entry name" value="SANT"/>
    <property type="match status" value="1"/>
</dbReference>
<protein>
    <recommendedName>
        <fullName>Egg-laying defective protein 27</fullName>
    </recommendedName>
</protein>
<feature type="chain" id="PRO_0000083511" description="Egg-laying defective protein 27">
    <location>
        <begin position="1"/>
        <end position="1129"/>
    </location>
</feature>
<feature type="domain" description="BAH" evidence="2">
    <location>
        <begin position="87"/>
        <end position="223"/>
    </location>
</feature>
<feature type="domain" description="ELM2" evidence="3">
    <location>
        <begin position="224"/>
        <end position="327"/>
    </location>
</feature>
<feature type="domain" description="SANT" evidence="4">
    <location>
        <begin position="332"/>
        <end position="384"/>
    </location>
</feature>
<feature type="zinc finger region" description="GATA-type; atypical" evidence="1">
    <location>
        <begin position="439"/>
        <end position="485"/>
    </location>
</feature>
<feature type="region of interest" description="Disordered" evidence="5">
    <location>
        <begin position="1"/>
        <end position="43"/>
    </location>
</feature>
<feature type="region of interest" description="Disordered" evidence="5">
    <location>
        <begin position="388"/>
        <end position="434"/>
    </location>
</feature>
<feature type="region of interest" description="Disordered" evidence="5">
    <location>
        <begin position="488"/>
        <end position="636"/>
    </location>
</feature>
<feature type="region of interest" description="Disordered" evidence="5">
    <location>
        <begin position="693"/>
        <end position="717"/>
    </location>
</feature>
<feature type="region of interest" description="Disordered" evidence="5">
    <location>
        <begin position="790"/>
        <end position="814"/>
    </location>
</feature>
<feature type="region of interest" description="Disordered" evidence="5">
    <location>
        <begin position="899"/>
        <end position="950"/>
    </location>
</feature>
<feature type="region of interest" description="Disordered" evidence="5">
    <location>
        <begin position="982"/>
        <end position="1040"/>
    </location>
</feature>
<feature type="compositionally biased region" description="Polar residues" evidence="5">
    <location>
        <begin position="1"/>
        <end position="11"/>
    </location>
</feature>
<feature type="compositionally biased region" description="Low complexity" evidence="5">
    <location>
        <begin position="22"/>
        <end position="33"/>
    </location>
</feature>
<feature type="compositionally biased region" description="Acidic residues" evidence="5">
    <location>
        <begin position="419"/>
        <end position="429"/>
    </location>
</feature>
<feature type="compositionally biased region" description="Polar residues" evidence="5">
    <location>
        <begin position="525"/>
        <end position="545"/>
    </location>
</feature>
<feature type="compositionally biased region" description="Polar residues" evidence="5">
    <location>
        <begin position="561"/>
        <end position="573"/>
    </location>
</feature>
<feature type="compositionally biased region" description="Acidic residues" evidence="5">
    <location>
        <begin position="613"/>
        <end position="634"/>
    </location>
</feature>
<feature type="compositionally biased region" description="Acidic residues" evidence="5">
    <location>
        <begin position="705"/>
        <end position="717"/>
    </location>
</feature>
<feature type="compositionally biased region" description="Low complexity" evidence="5">
    <location>
        <begin position="899"/>
        <end position="914"/>
    </location>
</feature>
<feature type="compositionally biased region" description="Basic and acidic residues" evidence="5">
    <location>
        <begin position="915"/>
        <end position="932"/>
    </location>
</feature>
<feature type="compositionally biased region" description="Low complexity" evidence="5">
    <location>
        <begin position="933"/>
        <end position="950"/>
    </location>
</feature>
<feature type="compositionally biased region" description="Low complexity" evidence="5">
    <location>
        <begin position="983"/>
        <end position="999"/>
    </location>
</feature>
<feature type="compositionally biased region" description="Basic and acidic residues" evidence="5">
    <location>
        <begin position="1000"/>
        <end position="1040"/>
    </location>
</feature>
<feature type="splice variant" id="VSP_019864" description="In isoform c." evidence="13">
    <location>
        <begin position="1"/>
        <end position="515"/>
    </location>
</feature>
<feature type="splice variant" id="VSP_047940" description="In isoform d." evidence="13">
    <location>
        <begin position="1"/>
        <end position="238"/>
    </location>
</feature>
<feature type="splice variant" id="VSP_047939" description="In isoform b." evidence="12">
    <location>
        <begin position="1"/>
        <end position="141"/>
    </location>
</feature>
<feature type="splice variant" id="VSP_001608" description="In isoform b and isoform d." evidence="12">
    <location>
        <begin position="294"/>
        <end position="296"/>
    </location>
</feature>
<feature type="splice variant" id="VSP_001609" description="In isoform c." evidence="13">
    <location>
        <begin position="886"/>
        <end position="887"/>
    </location>
</feature>
<feature type="sequence conflict" description="In Ref. 1; AAD27790." evidence="13" ref="1">
    <original>P</original>
    <variation>L</variation>
    <location>
        <position position="671"/>
    </location>
</feature>
<proteinExistence type="evidence at protein level"/>
<gene>
    <name evidence="14" type="primary">egl-27</name>
    <name evidence="14" type="ORF">C04A2.3</name>
</gene>
<keyword id="KW-0025">Alternative splicing</keyword>
<keyword id="KW-0217">Developmental protein</keyword>
<keyword id="KW-0238">DNA-binding</keyword>
<keyword id="KW-0479">Metal-binding</keyword>
<keyword id="KW-0539">Nucleus</keyword>
<keyword id="KW-1185">Reference proteome</keyword>
<keyword id="KW-0678">Repressor</keyword>
<keyword id="KW-0804">Transcription</keyword>
<keyword id="KW-0805">Transcription regulation</keyword>
<keyword id="KW-0862">Zinc</keyword>
<keyword id="KW-0863">Zinc-finger</keyword>
<sequence>MSRFDSQCSSEDVNKEDECVPSSSEDSQDGVSSPMENDDEPEFSQKHYDIEPCYYSLTGKSDRNCRGIVYRYRQDSDLKGFQSHDGTLYRLRDSVFVEVSQNEPYVIAAICGFKYTKRDHVVVKLTRYFRADDIPEISLNLMKQERAELEINPHLCPQSLNRELFNSELQITQPVSCLRGKCIVEYVKDVRHARTVADFSLDNDTFFFCLHYNQDSTKLASTHYAIRVGTSFQATLPPMAECSVGDDSDRDELLYRPNSIESGEEEDYIKLARCYRTYTLSGNHMLDSQKNARSLQVSDLLMDEAIIQLHRSGYKIDDALSELNANDIILTTDVDNMTQDDAKKFAKGIKQLGKNFSRIHRELLPHHSREQLVSYYYLWKKTPEATKPKQAARRVNPTSIKRPTKEKVKASRPTSTEYLDFDSASESDVENNGPSGRACHHCYGAESKDWHHANGLLLCTDCRLHYKKYGQLRQIANRPSQVPACLFKRSNSDEEESGVRTRAGKKEQRRRTPSSMSETPDRRSPSTVSNGAPNLTAEETPTKKLNGSVKRAPKRPLHNGVINNVEKSNSSEEPASPTTPPPTLTNGLTNGHGPESSTPNGETISKRMKVEPSYDDDDDEEEGKMTIDEGDDDPMPVLNGFKKEESVEEIKLELNGTIKKENGVETDPTTPTCSMEAENEVCETPAVVSVEIRDETNGETNSDLKDDENVEPDSPEDTFELGSNVEFETKNAMFVRSIVRSCGPRCARTDLIFKIKVGGVWEKSIKEKEERKKVHLQNQRIQDSEKVAIQQNQIKKEQQQSQPTPQQIHQQQAQQNAQHLQQLQQAVMLGHLPPEVLRQMMPPQFGVDPTAILMQQMMAGQQSQGVNAAFQHQMALQQQLEAHQVQFQLMMAHQHQQKMIAEQQQQQRHAAAQQLREREQREQRERERERQHQQQAQQALHQQQQQHAAAAANQLNPAMMQMMALMANSAASQQDIARLMEMAAQQQQQQQQAAQAQAQRDQERERREREAREREAAREREREQAAREAAARDQAAREHAQAVQAAAAAAQQAQALTPDMQHMHLLQQLMLNPALMMQLQQAQAQQQQQQPQVTNPLQMLQHGMAAQSANQAEMMRRIHPEPAMRPQHQ</sequence>
<evidence type="ECO:0000255" key="1">
    <source>
        <dbReference type="PROSITE-ProRule" id="PRU00094"/>
    </source>
</evidence>
<evidence type="ECO:0000255" key="2">
    <source>
        <dbReference type="PROSITE-ProRule" id="PRU00370"/>
    </source>
</evidence>
<evidence type="ECO:0000255" key="3">
    <source>
        <dbReference type="PROSITE-ProRule" id="PRU00512"/>
    </source>
</evidence>
<evidence type="ECO:0000255" key="4">
    <source>
        <dbReference type="PROSITE-ProRule" id="PRU00624"/>
    </source>
</evidence>
<evidence type="ECO:0000256" key="5">
    <source>
        <dbReference type="SAM" id="MobiDB-lite"/>
    </source>
</evidence>
<evidence type="ECO:0000269" key="6">
    <source>
    </source>
</evidence>
<evidence type="ECO:0000269" key="7">
    <source>
    </source>
</evidence>
<evidence type="ECO:0000269" key="8">
    <source>
    </source>
</evidence>
<evidence type="ECO:0000269" key="9">
    <source>
    </source>
</evidence>
<evidence type="ECO:0000269" key="10">
    <source>
    </source>
</evidence>
<evidence type="ECO:0000269" key="11">
    <source>
    </source>
</evidence>
<evidence type="ECO:0000303" key="12">
    <source>
    </source>
</evidence>
<evidence type="ECO:0000305" key="13"/>
<evidence type="ECO:0000312" key="14">
    <source>
        <dbReference type="WormBase" id="C04A2.3a"/>
    </source>
</evidence>
<evidence type="ECO:0000312" key="15">
    <source>
        <dbReference type="WormBase" id="C04A2.3b"/>
    </source>
</evidence>
<evidence type="ECO:0000312" key="16">
    <source>
        <dbReference type="WormBase" id="C04A2.3c"/>
    </source>
</evidence>
<evidence type="ECO:0000312" key="17">
    <source>
        <dbReference type="WormBase" id="C04A2.3d"/>
    </source>
</evidence>
<comment type="function">
    <text evidence="6 7 8 10 11">Transcription factor which promotes stress survival and delays aging. Required for cell cycle progression and development of the mesodermal and endodermal embryonic lineages (PubMed:25446273). Required for normal T-cell polarity, for correct migration of QL neuroblast descendants and other cells, for embryonic patterning and for the embryonic expression of hlh-8. Also required for the transdifferentiation of the Y rectal epithelial cell to the PDA motor neuron during larval development.</text>
</comment>
<comment type="subunit">
    <text evidence="7 9">Interacts with ceh-6, sem-4 and sox-2 (PubMed:22493276). Interacts with wdr-5.1 (PubMed:25124442).</text>
</comment>
<comment type="subcellular location">
    <subcellularLocation>
        <location evidence="3 4 6 7 11">Nucleus</location>
    </subcellularLocation>
</comment>
<comment type="alternative products">
    <event type="alternative splicing"/>
    <isoform>
        <id>Q09228-1</id>
        <name evidence="14">a</name>
        <sequence type="displayed"/>
    </isoform>
    <isoform>
        <id>Q09228-2</id>
        <name evidence="15">b</name>
        <sequence type="described" ref="VSP_047939 VSP_001608"/>
    </isoform>
    <isoform>
        <id>Q09228-3</id>
        <name evidence="16">c</name>
        <sequence type="described" ref="VSP_019864 VSP_001609"/>
    </isoform>
    <isoform>
        <id>Q09228-4</id>
        <name evidence="17">d</name>
        <sequence type="described" ref="VSP_047940 VSP_001608"/>
    </isoform>
</comment>
<comment type="tissue specificity">
    <text evidence="8">Expression detected in anterior intestine and head region.</text>
</comment>
<comment type="developmental stage">
    <text evidence="6 7 8 11">Expression detected from the 50-cell stage of embryogenesis through to adulthood. In the adult, expression increases two-fold between day 4 and day 14.</text>
</comment>
<comment type="induction">
    <text evidence="8">By starvation, heat stress, oxidative stress, and UV stress.</text>
</comment>
<comment type="domain">
    <text evidence="7">The SANT domain and GATA-type zinc finger are required for conversion of the Y rectal cell to the PDA neuron.</text>
</comment>
<comment type="disruption phenotype">
    <text evidence="7 8 10">Shortened lifespan and reduced survival in response to heat stress. Impaired differentiation of the Y rectal cell to the PDA neuron with the Y cell remaining undifferentiated in its original rectal location. Double RNAi-mediated knockdown with lin-40 results in delayed cell cycle progression in mesodermal and endodermal embryonic lineages, but accelerated cell cycle progression in a subset of embryonic lineages (PubMed:25446273).</text>
</comment>
<reference key="1">
    <citation type="journal article" date="1999" name="Development">
        <title>EGL-27 is similar to a metastasis-associated factor and controls cell polarity and cell migration in C. elegans.</title>
        <authorList>
            <person name="Herman M.A."/>
            <person name="Ch'ng Q."/>
            <person name="Hettenbach S.M."/>
            <person name="Ratliff T.M."/>
            <person name="Kenyon C."/>
            <person name="Herman R.K."/>
        </authorList>
    </citation>
    <scope>NUCLEOTIDE SEQUENCE [MRNA] (ISOFORM A)</scope>
    <scope>FUNCTION</scope>
    <scope>SUBCELLULAR LOCATION</scope>
    <scope>DEVELOPMENTAL STAGE</scope>
    <source>
        <strain>Bristol N2</strain>
    </source>
</reference>
<reference key="2">
    <citation type="journal article" date="1999" name="Development">
        <title>The Caenorhabditis elegans genes egl-27 and egr-1 are similar to MTA1, a member of a chromatin regulatory complex, and are redundantly required for embryonic patterning.</title>
        <authorList>
            <person name="Solari F."/>
            <person name="Bateman A."/>
            <person name="Ahringer J."/>
        </authorList>
    </citation>
    <scope>NUCLEOTIDE SEQUENCE [MRNA] (ISOFORM B)</scope>
    <scope>FUNCTION</scope>
    <scope>SUBCELLULAR LOCATION</scope>
    <scope>DEVELOPMENTAL STAGE</scope>
    <source>
        <strain>Bristol N2</strain>
    </source>
</reference>
<reference key="3">
    <citation type="journal article" date="1998" name="Science">
        <title>Genome sequence of the nematode C. elegans: a platform for investigating biology.</title>
        <authorList>
            <consortium name="The C. elegans sequencing consortium"/>
        </authorList>
    </citation>
    <scope>NUCLEOTIDE SEQUENCE [LARGE SCALE GENOMIC DNA]</scope>
    <source>
        <strain>Bristol N2</strain>
    </source>
</reference>
<reference key="4">
    <citation type="journal article" date="2012" name="Proc. Natl. Acad. Sci. U.S.A.">
        <title>Members of the NODE (Nanog and Oct4-associated deacetylase) complex and SOX-2 promote the initiation of a natural cellular reprogramming event in vivo.</title>
        <authorList>
            <person name="Kagias K."/>
            <person name="Ahier A."/>
            <person name="Fischer N."/>
            <person name="Jarriault S."/>
        </authorList>
    </citation>
    <scope>FUNCTION</scope>
    <scope>INTERACTION WITH CEH-6; SEM-4 AND SOX-2</scope>
    <scope>SUBCELLULAR LOCATION</scope>
    <scope>DEVELOPMENTAL STAGE</scope>
    <scope>DOMAIN</scope>
    <scope>DISRUPTION PHENOTYPE</scope>
</reference>
<reference key="5">
    <citation type="journal article" date="2012" name="PLoS Genet.">
        <title>The GATA transcription factor egl-27 delays aging by promoting stress resistance in Caenorhabditis elegans.</title>
        <authorList>
            <person name="Xu X."/>
            <person name="Kim S.K."/>
        </authorList>
    </citation>
    <scope>FUNCTION</scope>
    <scope>TISSUE SPECIFICITY</scope>
    <scope>DEVELOPMENTAL STAGE</scope>
    <scope>INDUCTION</scope>
    <scope>DISRUPTION PHENOTYPE</scope>
</reference>
<reference key="6">
    <citation type="journal article" date="2014" name="Science">
        <title>Sequential histone-modifying activities determine the robustness of transdifferentiation.</title>
        <authorList>
            <person name="Zuryn S."/>
            <person name="Ahier A."/>
            <person name="Portoso M."/>
            <person name="White E.R."/>
            <person name="Morin M.C."/>
            <person name="Margueron R."/>
            <person name="Jarriault S."/>
        </authorList>
    </citation>
    <scope>INTERACTION WITH WDR-5.1</scope>
</reference>
<reference key="7">
    <citation type="journal article" date="2015" name="Dev. Biol.">
        <title>Comprehensive single cell-resolution analysis of the role of chromatin regulators in early C. elegans embryogenesis.</title>
        <authorList>
            <person name="Krueger A.V."/>
            <person name="Jelier R."/>
            <person name="Dzyubachyk O."/>
            <person name="Zimmerman T."/>
            <person name="Meijering E."/>
            <person name="Lehner B."/>
        </authorList>
    </citation>
    <scope>FUNCTION</scope>
    <scope>DISRUPTION PHENOTYPE</scope>
</reference>